<comment type="function">
    <text evidence="2">The physiological role of BioH is to remove the methyl group introduced by BioC when the pimeloyl moiety is complete. It allows to synthesize pimeloyl-ACP via the fatty acid synthetic pathway through the hydrolysis of the ester bonds of pimeloyl-ACP esters.</text>
</comment>
<comment type="catalytic activity">
    <reaction evidence="2">
        <text>6-carboxyhexanoyl-[ACP] methyl ester + H2O = 6-carboxyhexanoyl-[ACP] + methanol + H(+)</text>
        <dbReference type="Rhea" id="RHEA:42700"/>
        <dbReference type="Rhea" id="RHEA-COMP:9955"/>
        <dbReference type="Rhea" id="RHEA-COMP:10186"/>
        <dbReference type="ChEBI" id="CHEBI:15377"/>
        <dbReference type="ChEBI" id="CHEBI:15378"/>
        <dbReference type="ChEBI" id="CHEBI:17790"/>
        <dbReference type="ChEBI" id="CHEBI:78846"/>
        <dbReference type="ChEBI" id="CHEBI:82735"/>
        <dbReference type="EC" id="3.1.1.85"/>
    </reaction>
</comment>
<comment type="pathway">
    <text evidence="2">Cofactor biosynthesis; biotin biosynthesis.</text>
</comment>
<comment type="subunit">
    <text evidence="2">Monomer.</text>
</comment>
<comment type="subcellular location">
    <subcellularLocation>
        <location evidence="2">Cytoplasm</location>
    </subcellularLocation>
</comment>
<comment type="similarity">
    <text evidence="2">Belongs to the AB hydrolase superfamily. Carboxylesterase BioH family.</text>
</comment>
<name>BIOH_SHISS</name>
<organism>
    <name type="scientific">Shigella sonnei (strain Ss046)</name>
    <dbReference type="NCBI Taxonomy" id="300269"/>
    <lineage>
        <taxon>Bacteria</taxon>
        <taxon>Pseudomonadati</taxon>
        <taxon>Pseudomonadota</taxon>
        <taxon>Gammaproteobacteria</taxon>
        <taxon>Enterobacterales</taxon>
        <taxon>Enterobacteriaceae</taxon>
        <taxon>Shigella</taxon>
    </lineage>
</organism>
<reference key="1">
    <citation type="journal article" date="2005" name="Nucleic Acids Res.">
        <title>Genome dynamics and diversity of Shigella species, the etiologic agents of bacillary dysentery.</title>
        <authorList>
            <person name="Yang F."/>
            <person name="Yang J."/>
            <person name="Zhang X."/>
            <person name="Chen L."/>
            <person name="Jiang Y."/>
            <person name="Yan Y."/>
            <person name="Tang X."/>
            <person name="Wang J."/>
            <person name="Xiong Z."/>
            <person name="Dong J."/>
            <person name="Xue Y."/>
            <person name="Zhu Y."/>
            <person name="Xu X."/>
            <person name="Sun L."/>
            <person name="Chen S."/>
            <person name="Nie H."/>
            <person name="Peng J."/>
            <person name="Xu J."/>
            <person name="Wang Y."/>
            <person name="Yuan Z."/>
            <person name="Wen Y."/>
            <person name="Yao Z."/>
            <person name="Shen Y."/>
            <person name="Qiang B."/>
            <person name="Hou Y."/>
            <person name="Yu J."/>
            <person name="Jin Q."/>
        </authorList>
    </citation>
    <scope>NUCLEOTIDE SEQUENCE [LARGE SCALE GENOMIC DNA]</scope>
    <source>
        <strain>Ss046</strain>
    </source>
</reference>
<proteinExistence type="inferred from homology"/>
<feature type="chain" id="PRO_1000067278" description="Pimeloyl-[acyl-carrier protein] methyl ester esterase">
    <location>
        <begin position="1"/>
        <end position="256"/>
    </location>
</feature>
<feature type="domain" description="AB hydrolase-1" evidence="1">
    <location>
        <begin position="15"/>
        <end position="242"/>
    </location>
</feature>
<feature type="active site" description="Nucleophile" evidence="2">
    <location>
        <position position="82"/>
    </location>
</feature>
<feature type="active site" evidence="2">
    <location>
        <position position="207"/>
    </location>
</feature>
<feature type="active site" evidence="2">
    <location>
        <position position="235"/>
    </location>
</feature>
<feature type="binding site" evidence="2">
    <location>
        <position position="22"/>
    </location>
    <ligand>
        <name>substrate</name>
    </ligand>
</feature>
<feature type="binding site" evidence="2">
    <location>
        <begin position="82"/>
        <end position="83"/>
    </location>
    <ligand>
        <name>substrate</name>
    </ligand>
</feature>
<feature type="binding site" evidence="2">
    <location>
        <begin position="143"/>
        <end position="147"/>
    </location>
    <ligand>
        <name>substrate</name>
    </ligand>
</feature>
<feature type="binding site" evidence="2">
    <location>
        <position position="235"/>
    </location>
    <ligand>
        <name>substrate</name>
    </ligand>
</feature>
<keyword id="KW-0093">Biotin biosynthesis</keyword>
<keyword id="KW-0963">Cytoplasm</keyword>
<keyword id="KW-0378">Hydrolase</keyword>
<keyword id="KW-1185">Reference proteome</keyword>
<keyword id="KW-0719">Serine esterase</keyword>
<evidence type="ECO:0000255" key="1"/>
<evidence type="ECO:0000255" key="2">
    <source>
        <dbReference type="HAMAP-Rule" id="MF_01260"/>
    </source>
</evidence>
<accession>Q3YWL3</accession>
<gene>
    <name evidence="2" type="primary">bioH</name>
    <name type="ordered locus">SSON_3545</name>
</gene>
<sequence length="256" mass="28519">MNNIWWQTKGQGNVHLVLLHGWGLNAEVWRCIDEELSSHFTLHLVDLPGFGRSQGFGALSLADMAEAVLQQAPDKAIWLGWSLGGLVASQIALTHPERVQALVTVASSPCFSARDDWPGIKPDVLAGFQQQLSDDFQRTVERFLALQTMGTETARQDARALKKTVLALPMPEVDVLNGGLEILKTVDLRQPLQNVPMPFLRLYGYLDGLVPRKVVPMLDKLWPRSKSYIFAKAAHAPFISHPVEFCHLLVALKQRV</sequence>
<protein>
    <recommendedName>
        <fullName evidence="2">Pimeloyl-[acyl-carrier protein] methyl ester esterase</fullName>
        <ecNumber evidence="2">3.1.1.85</ecNumber>
    </recommendedName>
    <alternativeName>
        <fullName evidence="2">Biotin synthesis protein BioH</fullName>
    </alternativeName>
    <alternativeName>
        <fullName evidence="2">Carboxylesterase BioH</fullName>
    </alternativeName>
</protein>
<dbReference type="EC" id="3.1.1.85" evidence="2"/>
<dbReference type="EMBL" id="CP000038">
    <property type="protein sequence ID" value="AAZ90100.1"/>
    <property type="molecule type" value="Genomic_DNA"/>
</dbReference>
<dbReference type="RefSeq" id="WP_001060056.1">
    <property type="nucleotide sequence ID" value="NC_007384.1"/>
</dbReference>
<dbReference type="SMR" id="Q3YWL3"/>
<dbReference type="ESTHER" id="shifl-BIOH">
    <property type="family name" value="BioH"/>
</dbReference>
<dbReference type="GeneID" id="93778584"/>
<dbReference type="KEGG" id="ssn:SSON_3545"/>
<dbReference type="HOGENOM" id="CLU_020336_12_2_6"/>
<dbReference type="UniPathway" id="UPA00078"/>
<dbReference type="Proteomes" id="UP000002529">
    <property type="component" value="Chromosome"/>
</dbReference>
<dbReference type="GO" id="GO:0005737">
    <property type="term" value="C:cytoplasm"/>
    <property type="evidence" value="ECO:0007669"/>
    <property type="project" value="UniProtKB-SubCell"/>
</dbReference>
<dbReference type="GO" id="GO:0090499">
    <property type="term" value="F:pimelyl-[acyl-carrier protein] methyl ester esterase activity"/>
    <property type="evidence" value="ECO:0007669"/>
    <property type="project" value="UniProtKB-EC"/>
</dbReference>
<dbReference type="GO" id="GO:0009102">
    <property type="term" value="P:biotin biosynthetic process"/>
    <property type="evidence" value="ECO:0007669"/>
    <property type="project" value="UniProtKB-UniRule"/>
</dbReference>
<dbReference type="FunFam" id="3.40.50.1820:FF:000045">
    <property type="entry name" value="Pimeloyl-[acyl-carrier protein] methyl ester esterase"/>
    <property type="match status" value="1"/>
</dbReference>
<dbReference type="Gene3D" id="3.40.50.1820">
    <property type="entry name" value="alpha/beta hydrolase"/>
    <property type="match status" value="1"/>
</dbReference>
<dbReference type="HAMAP" id="MF_01260">
    <property type="entry name" value="Carboxylester"/>
    <property type="match status" value="1"/>
</dbReference>
<dbReference type="InterPro" id="IPR000073">
    <property type="entry name" value="AB_hydrolase_1"/>
</dbReference>
<dbReference type="InterPro" id="IPR029058">
    <property type="entry name" value="AB_hydrolase_fold"/>
</dbReference>
<dbReference type="InterPro" id="IPR010076">
    <property type="entry name" value="BioH"/>
</dbReference>
<dbReference type="InterPro" id="IPR050228">
    <property type="entry name" value="Carboxylesterase_BioH"/>
</dbReference>
<dbReference type="NCBIfam" id="TIGR01738">
    <property type="entry name" value="bioH"/>
    <property type="match status" value="1"/>
</dbReference>
<dbReference type="NCBIfam" id="NF007674">
    <property type="entry name" value="PRK10349.1"/>
    <property type="match status" value="1"/>
</dbReference>
<dbReference type="PANTHER" id="PTHR43194">
    <property type="entry name" value="HYDROLASE ALPHA/BETA FOLD FAMILY"/>
    <property type="match status" value="1"/>
</dbReference>
<dbReference type="PANTHER" id="PTHR43194:SF5">
    <property type="entry name" value="PIMELOYL-[ACYL-CARRIER PROTEIN] METHYL ESTER ESTERASE"/>
    <property type="match status" value="1"/>
</dbReference>
<dbReference type="Pfam" id="PF00561">
    <property type="entry name" value="Abhydrolase_1"/>
    <property type="match status" value="1"/>
</dbReference>
<dbReference type="SUPFAM" id="SSF53474">
    <property type="entry name" value="alpha/beta-Hydrolases"/>
    <property type="match status" value="1"/>
</dbReference>